<keyword id="KW-0496">Mitochondrion</keyword>
<keyword id="KW-0597">Phosphoprotein</keyword>
<keyword id="KW-1185">Reference proteome</keyword>
<keyword id="KW-0687">Ribonucleoprotein</keyword>
<keyword id="KW-0689">Ribosomal protein</keyword>
<keyword id="KW-0809">Transit peptide</keyword>
<evidence type="ECO:0000250" key="1">
    <source>
        <dbReference type="UniProtKB" id="A8NN94"/>
    </source>
</evidence>
<evidence type="ECO:0000250" key="2">
    <source>
        <dbReference type="UniProtKB" id="Q9BQ48"/>
    </source>
</evidence>
<evidence type="ECO:0000305" key="3"/>
<comment type="subunit">
    <text evidence="2">Component of the mitochondrial ribosome large subunit (39S) which comprises a 16S rRNA and about 50 distinct proteins.</text>
</comment>
<comment type="subcellular location">
    <subcellularLocation>
        <location evidence="2">Mitochondrion</location>
    </subcellularLocation>
</comment>
<comment type="similarity">
    <text evidence="3">Belongs to the bacterial ribosomal protein bL34 family.</text>
</comment>
<dbReference type="EMBL" id="AB049653">
    <property type="protein sequence ID" value="BAB40858.1"/>
    <property type="molecule type" value="mRNA"/>
</dbReference>
<dbReference type="EMBL" id="AK018724">
    <property type="protein sequence ID" value="BAC25562.1"/>
    <property type="molecule type" value="mRNA"/>
</dbReference>
<dbReference type="EMBL" id="AK170156">
    <property type="protein sequence ID" value="BAE41603.1"/>
    <property type="molecule type" value="mRNA"/>
</dbReference>
<dbReference type="EMBL" id="BC052086">
    <property type="protein sequence ID" value="AAH52086.1"/>
    <property type="molecule type" value="mRNA"/>
</dbReference>
<dbReference type="EMBL" id="BC056979">
    <property type="protein sequence ID" value="AAH56979.1"/>
    <property type="molecule type" value="mRNA"/>
</dbReference>
<dbReference type="CCDS" id="CCDS40383.1"/>
<dbReference type="RefSeq" id="NP_444392.1">
    <property type="nucleotide sequence ID" value="NM_053162.2"/>
</dbReference>
<dbReference type="SMR" id="Q99N91"/>
<dbReference type="BioGRID" id="220437">
    <property type="interactions" value="22"/>
</dbReference>
<dbReference type="ComplexPortal" id="CPX-5302">
    <property type="entry name" value="39S mitochondrial large ribosomal subunit"/>
</dbReference>
<dbReference type="FunCoup" id="Q99N91">
    <property type="interactions" value="561"/>
</dbReference>
<dbReference type="STRING" id="10090.ENSMUSP00000044497"/>
<dbReference type="PhosphoSitePlus" id="Q99N91"/>
<dbReference type="jPOST" id="Q99N91"/>
<dbReference type="PaxDb" id="10090-ENSMUSP00000044497"/>
<dbReference type="PeptideAtlas" id="Q99N91"/>
<dbReference type="ProteomicsDB" id="260979"/>
<dbReference type="Pumba" id="Q99N91"/>
<dbReference type="Antibodypedia" id="43756">
    <property type="antibodies" value="80 antibodies from 21 providers"/>
</dbReference>
<dbReference type="DNASU" id="94065"/>
<dbReference type="Ensembl" id="ENSMUST00000048914.8">
    <property type="protein sequence ID" value="ENSMUSP00000044497.7"/>
    <property type="gene ID" value="ENSMUSG00000034880.8"/>
</dbReference>
<dbReference type="GeneID" id="94065"/>
<dbReference type="KEGG" id="mmu:94065"/>
<dbReference type="UCSC" id="uc009mdh.1">
    <property type="organism name" value="mouse"/>
</dbReference>
<dbReference type="AGR" id="MGI:2137227"/>
<dbReference type="CTD" id="64981"/>
<dbReference type="MGI" id="MGI:2137227">
    <property type="gene designation" value="Mrpl34"/>
</dbReference>
<dbReference type="VEuPathDB" id="HostDB:ENSMUSG00000034880"/>
<dbReference type="eggNOG" id="KOG4612">
    <property type="taxonomic scope" value="Eukaryota"/>
</dbReference>
<dbReference type="GeneTree" id="ENSGT00390000012240"/>
<dbReference type="HOGENOM" id="CLU_2372198_0_0_1"/>
<dbReference type="InParanoid" id="Q99N91"/>
<dbReference type="OMA" id="LQPRVWM"/>
<dbReference type="OrthoDB" id="431691at2759"/>
<dbReference type="PhylomeDB" id="Q99N91"/>
<dbReference type="TreeFam" id="TF324478"/>
<dbReference type="Reactome" id="R-MMU-5389840">
    <property type="pathway name" value="Mitochondrial translation elongation"/>
</dbReference>
<dbReference type="Reactome" id="R-MMU-5419276">
    <property type="pathway name" value="Mitochondrial translation termination"/>
</dbReference>
<dbReference type="BioGRID-ORCS" id="94065">
    <property type="hits" value="21 hits in 77 CRISPR screens"/>
</dbReference>
<dbReference type="ChiTaRS" id="Mrpl34">
    <property type="organism name" value="mouse"/>
</dbReference>
<dbReference type="PRO" id="PR:Q99N91"/>
<dbReference type="Proteomes" id="UP000000589">
    <property type="component" value="Chromosome 8"/>
</dbReference>
<dbReference type="RNAct" id="Q99N91">
    <property type="molecule type" value="protein"/>
</dbReference>
<dbReference type="Bgee" id="ENSMUSG00000034880">
    <property type="expression patterns" value="Expressed in epiblast cell in embryo and 262 other cell types or tissues"/>
</dbReference>
<dbReference type="GO" id="GO:0005743">
    <property type="term" value="C:mitochondrial inner membrane"/>
    <property type="evidence" value="ECO:0000303"/>
    <property type="project" value="ComplexPortal"/>
</dbReference>
<dbReference type="GO" id="GO:0005762">
    <property type="term" value="C:mitochondrial large ribosomal subunit"/>
    <property type="evidence" value="ECO:0000250"/>
    <property type="project" value="UniProtKB"/>
</dbReference>
<dbReference type="GO" id="GO:0005739">
    <property type="term" value="C:mitochondrion"/>
    <property type="evidence" value="ECO:0007005"/>
    <property type="project" value="MGI"/>
</dbReference>
<dbReference type="GO" id="GO:0003735">
    <property type="term" value="F:structural constituent of ribosome"/>
    <property type="evidence" value="ECO:0000266"/>
    <property type="project" value="MGI"/>
</dbReference>
<dbReference type="GO" id="GO:0032543">
    <property type="term" value="P:mitochondrial translation"/>
    <property type="evidence" value="ECO:0000303"/>
    <property type="project" value="ComplexPortal"/>
</dbReference>
<dbReference type="GO" id="GO:0006412">
    <property type="term" value="P:translation"/>
    <property type="evidence" value="ECO:0000266"/>
    <property type="project" value="MGI"/>
</dbReference>
<dbReference type="FunFam" id="1.10.287.3980:FF:000001">
    <property type="entry name" value="Mitochondrial ribosomal protein L34"/>
    <property type="match status" value="1"/>
</dbReference>
<dbReference type="Gene3D" id="1.10.287.3980">
    <property type="match status" value="1"/>
</dbReference>
<dbReference type="InterPro" id="IPR000271">
    <property type="entry name" value="Ribosomal_bL34"/>
</dbReference>
<dbReference type="NCBIfam" id="TIGR01030">
    <property type="entry name" value="rpmH_bact"/>
    <property type="match status" value="1"/>
</dbReference>
<dbReference type="PANTHER" id="PTHR14503:SF4">
    <property type="entry name" value="LARGE RIBOSOMAL SUBUNIT PROTEIN BL34M"/>
    <property type="match status" value="1"/>
</dbReference>
<dbReference type="PANTHER" id="PTHR14503">
    <property type="entry name" value="MITOCHONDRIAL RIBOSOMAL PROTEIN 34 FAMILY MEMBER"/>
    <property type="match status" value="1"/>
</dbReference>
<dbReference type="Pfam" id="PF00468">
    <property type="entry name" value="Ribosomal_L34"/>
    <property type="match status" value="1"/>
</dbReference>
<accession>Q99N91</accession>
<accession>Q3TDJ8</accession>
<protein>
    <recommendedName>
        <fullName evidence="3">Large ribosomal subunit protein bL34m</fullName>
    </recommendedName>
    <alternativeName>
        <fullName>39S ribosomal protein L34, mitochondrial</fullName>
        <shortName>L34mt</shortName>
        <shortName>MRP-L34</shortName>
    </alternativeName>
</protein>
<feature type="transit peptide" description="Mitochondrion" evidence="1">
    <location>
        <begin position="1"/>
        <end position="46"/>
    </location>
</feature>
<feature type="chain" id="PRO_0000030521" description="Large ribosomal subunit protein bL34m">
    <location>
        <begin position="47"/>
        <end position="92"/>
    </location>
</feature>
<feature type="modified residue" description="Phosphoserine" evidence="2">
    <location>
        <position position="71"/>
    </location>
</feature>
<proteinExistence type="evidence at protein level"/>
<name>RM34_MOUSE</name>
<reference key="1">
    <citation type="journal article" date="2001" name="J. Biol. Chem.">
        <title>Structural compensation for the deficit of rRNA with proteins in the mammalian mitochondrial ribosome. Systematic analysis of protein components of the large ribosomal subunit from mammalian mitochondria.</title>
        <authorList>
            <person name="Suzuki T."/>
            <person name="Terasaki M."/>
            <person name="Takemoto-Hori C."/>
            <person name="Hanada T."/>
            <person name="Ueda T."/>
            <person name="Wada A."/>
            <person name="Watanabe K."/>
        </authorList>
    </citation>
    <scope>NUCLEOTIDE SEQUENCE [MRNA]</scope>
</reference>
<reference key="2">
    <citation type="journal article" date="2005" name="Science">
        <title>The transcriptional landscape of the mammalian genome.</title>
        <authorList>
            <person name="Carninci P."/>
            <person name="Kasukawa T."/>
            <person name="Katayama S."/>
            <person name="Gough J."/>
            <person name="Frith M.C."/>
            <person name="Maeda N."/>
            <person name="Oyama R."/>
            <person name="Ravasi T."/>
            <person name="Lenhard B."/>
            <person name="Wells C."/>
            <person name="Kodzius R."/>
            <person name="Shimokawa K."/>
            <person name="Bajic V.B."/>
            <person name="Brenner S.E."/>
            <person name="Batalov S."/>
            <person name="Forrest A.R."/>
            <person name="Zavolan M."/>
            <person name="Davis M.J."/>
            <person name="Wilming L.G."/>
            <person name="Aidinis V."/>
            <person name="Allen J.E."/>
            <person name="Ambesi-Impiombato A."/>
            <person name="Apweiler R."/>
            <person name="Aturaliya R.N."/>
            <person name="Bailey T.L."/>
            <person name="Bansal M."/>
            <person name="Baxter L."/>
            <person name="Beisel K.W."/>
            <person name="Bersano T."/>
            <person name="Bono H."/>
            <person name="Chalk A.M."/>
            <person name="Chiu K.P."/>
            <person name="Choudhary V."/>
            <person name="Christoffels A."/>
            <person name="Clutterbuck D.R."/>
            <person name="Crowe M.L."/>
            <person name="Dalla E."/>
            <person name="Dalrymple B.P."/>
            <person name="de Bono B."/>
            <person name="Della Gatta G."/>
            <person name="di Bernardo D."/>
            <person name="Down T."/>
            <person name="Engstrom P."/>
            <person name="Fagiolini M."/>
            <person name="Faulkner G."/>
            <person name="Fletcher C.F."/>
            <person name="Fukushima T."/>
            <person name="Furuno M."/>
            <person name="Futaki S."/>
            <person name="Gariboldi M."/>
            <person name="Georgii-Hemming P."/>
            <person name="Gingeras T.R."/>
            <person name="Gojobori T."/>
            <person name="Green R.E."/>
            <person name="Gustincich S."/>
            <person name="Harbers M."/>
            <person name="Hayashi Y."/>
            <person name="Hensch T.K."/>
            <person name="Hirokawa N."/>
            <person name="Hill D."/>
            <person name="Huminiecki L."/>
            <person name="Iacono M."/>
            <person name="Ikeo K."/>
            <person name="Iwama A."/>
            <person name="Ishikawa T."/>
            <person name="Jakt M."/>
            <person name="Kanapin A."/>
            <person name="Katoh M."/>
            <person name="Kawasawa Y."/>
            <person name="Kelso J."/>
            <person name="Kitamura H."/>
            <person name="Kitano H."/>
            <person name="Kollias G."/>
            <person name="Krishnan S.P."/>
            <person name="Kruger A."/>
            <person name="Kummerfeld S.K."/>
            <person name="Kurochkin I.V."/>
            <person name="Lareau L.F."/>
            <person name="Lazarevic D."/>
            <person name="Lipovich L."/>
            <person name="Liu J."/>
            <person name="Liuni S."/>
            <person name="McWilliam S."/>
            <person name="Madan Babu M."/>
            <person name="Madera M."/>
            <person name="Marchionni L."/>
            <person name="Matsuda H."/>
            <person name="Matsuzawa S."/>
            <person name="Miki H."/>
            <person name="Mignone F."/>
            <person name="Miyake S."/>
            <person name="Morris K."/>
            <person name="Mottagui-Tabar S."/>
            <person name="Mulder N."/>
            <person name="Nakano N."/>
            <person name="Nakauchi H."/>
            <person name="Ng P."/>
            <person name="Nilsson R."/>
            <person name="Nishiguchi S."/>
            <person name="Nishikawa S."/>
            <person name="Nori F."/>
            <person name="Ohara O."/>
            <person name="Okazaki Y."/>
            <person name="Orlando V."/>
            <person name="Pang K.C."/>
            <person name="Pavan W.J."/>
            <person name="Pavesi G."/>
            <person name="Pesole G."/>
            <person name="Petrovsky N."/>
            <person name="Piazza S."/>
            <person name="Reed J."/>
            <person name="Reid J.F."/>
            <person name="Ring B.Z."/>
            <person name="Ringwald M."/>
            <person name="Rost B."/>
            <person name="Ruan Y."/>
            <person name="Salzberg S.L."/>
            <person name="Sandelin A."/>
            <person name="Schneider C."/>
            <person name="Schoenbach C."/>
            <person name="Sekiguchi K."/>
            <person name="Semple C.A."/>
            <person name="Seno S."/>
            <person name="Sessa L."/>
            <person name="Sheng Y."/>
            <person name="Shibata Y."/>
            <person name="Shimada H."/>
            <person name="Shimada K."/>
            <person name="Silva D."/>
            <person name="Sinclair B."/>
            <person name="Sperling S."/>
            <person name="Stupka E."/>
            <person name="Sugiura K."/>
            <person name="Sultana R."/>
            <person name="Takenaka Y."/>
            <person name="Taki K."/>
            <person name="Tammoja K."/>
            <person name="Tan S.L."/>
            <person name="Tang S."/>
            <person name="Taylor M.S."/>
            <person name="Tegner J."/>
            <person name="Teichmann S.A."/>
            <person name="Ueda H.R."/>
            <person name="van Nimwegen E."/>
            <person name="Verardo R."/>
            <person name="Wei C.L."/>
            <person name="Yagi K."/>
            <person name="Yamanishi H."/>
            <person name="Zabarovsky E."/>
            <person name="Zhu S."/>
            <person name="Zimmer A."/>
            <person name="Hide W."/>
            <person name="Bult C."/>
            <person name="Grimmond S.M."/>
            <person name="Teasdale R.D."/>
            <person name="Liu E.T."/>
            <person name="Brusic V."/>
            <person name="Quackenbush J."/>
            <person name="Wahlestedt C."/>
            <person name="Mattick J.S."/>
            <person name="Hume D.A."/>
            <person name="Kai C."/>
            <person name="Sasaki D."/>
            <person name="Tomaru Y."/>
            <person name="Fukuda S."/>
            <person name="Kanamori-Katayama M."/>
            <person name="Suzuki M."/>
            <person name="Aoki J."/>
            <person name="Arakawa T."/>
            <person name="Iida J."/>
            <person name="Imamura K."/>
            <person name="Itoh M."/>
            <person name="Kato T."/>
            <person name="Kawaji H."/>
            <person name="Kawagashira N."/>
            <person name="Kawashima T."/>
            <person name="Kojima M."/>
            <person name="Kondo S."/>
            <person name="Konno H."/>
            <person name="Nakano K."/>
            <person name="Ninomiya N."/>
            <person name="Nishio T."/>
            <person name="Okada M."/>
            <person name="Plessy C."/>
            <person name="Shibata K."/>
            <person name="Shiraki T."/>
            <person name="Suzuki S."/>
            <person name="Tagami M."/>
            <person name="Waki K."/>
            <person name="Watahiki A."/>
            <person name="Okamura-Oho Y."/>
            <person name="Suzuki H."/>
            <person name="Kawai J."/>
            <person name="Hayashizaki Y."/>
        </authorList>
    </citation>
    <scope>NUCLEOTIDE SEQUENCE [LARGE SCALE MRNA]</scope>
    <source>
        <strain>C57BL/6J</strain>
        <strain>NOD</strain>
        <tissue>Kidney</tissue>
    </source>
</reference>
<reference key="3">
    <citation type="journal article" date="2004" name="Genome Res.">
        <title>The status, quality, and expansion of the NIH full-length cDNA project: the Mammalian Gene Collection (MGC).</title>
        <authorList>
            <consortium name="The MGC Project Team"/>
        </authorList>
    </citation>
    <scope>NUCLEOTIDE SEQUENCE [LARGE SCALE MRNA]</scope>
    <source>
        <strain>C57BL/6J</strain>
        <tissue>Brain</tissue>
    </source>
</reference>
<reference key="4">
    <citation type="journal article" date="2010" name="Cell">
        <title>A tissue-specific atlas of mouse protein phosphorylation and expression.</title>
        <authorList>
            <person name="Huttlin E.L."/>
            <person name="Jedrychowski M.P."/>
            <person name="Elias J.E."/>
            <person name="Goswami T."/>
            <person name="Rad R."/>
            <person name="Beausoleil S.A."/>
            <person name="Villen J."/>
            <person name="Haas W."/>
            <person name="Sowa M.E."/>
            <person name="Gygi S.P."/>
        </authorList>
    </citation>
    <scope>IDENTIFICATION BY MASS SPECTROMETRY [LARGE SCALE ANALYSIS]</scope>
    <source>
        <tissue>Liver</tissue>
    </source>
</reference>
<organism>
    <name type="scientific">Mus musculus</name>
    <name type="common">Mouse</name>
    <dbReference type="NCBI Taxonomy" id="10090"/>
    <lineage>
        <taxon>Eukaryota</taxon>
        <taxon>Metazoa</taxon>
        <taxon>Chordata</taxon>
        <taxon>Craniata</taxon>
        <taxon>Vertebrata</taxon>
        <taxon>Euteleostomi</taxon>
        <taxon>Mammalia</taxon>
        <taxon>Eutheria</taxon>
        <taxon>Euarchontoglires</taxon>
        <taxon>Glires</taxon>
        <taxon>Rodentia</taxon>
        <taxon>Myomorpha</taxon>
        <taxon>Muroidea</taxon>
        <taxon>Muridae</taxon>
        <taxon>Murinae</taxon>
        <taxon>Mus</taxon>
        <taxon>Mus</taxon>
    </lineage>
</organism>
<sequence length="92" mass="10531">MAFLARCFGCQACRSVALLSGRYLQSRVWMGLPDSWPLLSLQQARGRARGNEYQPSNIKRKHKHGWVRRLSTPAGVQVILRRMLKGRKSLSH</sequence>
<gene>
    <name type="primary">Mrpl34</name>
</gene>